<organism>
    <name type="scientific">Hamiltonella defensa subsp. Acyrthosiphon pisum (strain 5AT)</name>
    <dbReference type="NCBI Taxonomy" id="572265"/>
    <lineage>
        <taxon>Bacteria</taxon>
        <taxon>Pseudomonadati</taxon>
        <taxon>Pseudomonadota</taxon>
        <taxon>Gammaproteobacteria</taxon>
        <taxon>Enterobacterales</taxon>
        <taxon>Enterobacteriaceae</taxon>
        <taxon>aphid secondary symbionts</taxon>
        <taxon>Candidatus Hamiltonella</taxon>
    </lineage>
</organism>
<name>RL33_HAMD5</name>
<reference key="1">
    <citation type="journal article" date="2009" name="Proc. Natl. Acad. Sci. U.S.A.">
        <title>Hamiltonella defensa, genome evolution of protective bacterial endosymbiont from pathogenic ancestors.</title>
        <authorList>
            <person name="Degnan P.H."/>
            <person name="Yu Y."/>
            <person name="Sisneros N."/>
            <person name="Wing R.A."/>
            <person name="Moran N.A."/>
        </authorList>
    </citation>
    <scope>NUCLEOTIDE SEQUENCE [LARGE SCALE GENOMIC DNA]</scope>
    <source>
        <strain>5AT</strain>
    </source>
</reference>
<gene>
    <name evidence="1" type="primary">rpmG</name>
    <name type="ordered locus">HDEF_1915</name>
</gene>
<sequence length="55" mass="6400">MAKSVREKIKLVSSAGTGHFYTTSKNKRTQTTKLEFKKYDPVVRQHVIYKEAKIK</sequence>
<protein>
    <recommendedName>
        <fullName evidence="1">Large ribosomal subunit protein bL33</fullName>
    </recommendedName>
    <alternativeName>
        <fullName evidence="2">50S ribosomal protein L33</fullName>
    </alternativeName>
</protein>
<keyword id="KW-0687">Ribonucleoprotein</keyword>
<keyword id="KW-0689">Ribosomal protein</keyword>
<evidence type="ECO:0000255" key="1">
    <source>
        <dbReference type="HAMAP-Rule" id="MF_00294"/>
    </source>
</evidence>
<evidence type="ECO:0000305" key="2"/>
<comment type="similarity">
    <text evidence="1">Belongs to the bacterial ribosomal protein bL33 family.</text>
</comment>
<dbReference type="EMBL" id="CP001277">
    <property type="protein sequence ID" value="ACQ68504.1"/>
    <property type="molecule type" value="Genomic_DNA"/>
</dbReference>
<dbReference type="RefSeq" id="WP_015874266.1">
    <property type="nucleotide sequence ID" value="NC_012751.1"/>
</dbReference>
<dbReference type="SMR" id="C4K7G1"/>
<dbReference type="STRING" id="572265.HDEF_1915"/>
<dbReference type="GeneID" id="66261492"/>
<dbReference type="KEGG" id="hde:HDEF_1915"/>
<dbReference type="eggNOG" id="COG0267">
    <property type="taxonomic scope" value="Bacteria"/>
</dbReference>
<dbReference type="HOGENOM" id="CLU_190949_1_1_6"/>
<dbReference type="Proteomes" id="UP000002334">
    <property type="component" value="Chromosome"/>
</dbReference>
<dbReference type="GO" id="GO:0022625">
    <property type="term" value="C:cytosolic large ribosomal subunit"/>
    <property type="evidence" value="ECO:0007669"/>
    <property type="project" value="TreeGrafter"/>
</dbReference>
<dbReference type="GO" id="GO:0003735">
    <property type="term" value="F:structural constituent of ribosome"/>
    <property type="evidence" value="ECO:0007669"/>
    <property type="project" value="InterPro"/>
</dbReference>
<dbReference type="GO" id="GO:0006412">
    <property type="term" value="P:translation"/>
    <property type="evidence" value="ECO:0007669"/>
    <property type="project" value="UniProtKB-UniRule"/>
</dbReference>
<dbReference type="FunFam" id="2.20.28.120:FF:000001">
    <property type="entry name" value="50S ribosomal protein L33"/>
    <property type="match status" value="1"/>
</dbReference>
<dbReference type="Gene3D" id="2.20.28.120">
    <property type="entry name" value="Ribosomal protein L33"/>
    <property type="match status" value="1"/>
</dbReference>
<dbReference type="HAMAP" id="MF_00294">
    <property type="entry name" value="Ribosomal_bL33"/>
    <property type="match status" value="1"/>
</dbReference>
<dbReference type="InterPro" id="IPR001705">
    <property type="entry name" value="Ribosomal_bL33"/>
</dbReference>
<dbReference type="InterPro" id="IPR018264">
    <property type="entry name" value="Ribosomal_bL33_CS"/>
</dbReference>
<dbReference type="InterPro" id="IPR038584">
    <property type="entry name" value="Ribosomal_bL33_sf"/>
</dbReference>
<dbReference type="InterPro" id="IPR011332">
    <property type="entry name" value="Ribosomal_zn-bd"/>
</dbReference>
<dbReference type="NCBIfam" id="NF001860">
    <property type="entry name" value="PRK00595.1"/>
    <property type="match status" value="1"/>
</dbReference>
<dbReference type="NCBIfam" id="TIGR01023">
    <property type="entry name" value="rpmG_bact"/>
    <property type="match status" value="1"/>
</dbReference>
<dbReference type="PANTHER" id="PTHR15238">
    <property type="entry name" value="54S RIBOSOMAL PROTEIN L39, MITOCHONDRIAL"/>
    <property type="match status" value="1"/>
</dbReference>
<dbReference type="PANTHER" id="PTHR15238:SF1">
    <property type="entry name" value="LARGE RIBOSOMAL SUBUNIT PROTEIN BL33M"/>
    <property type="match status" value="1"/>
</dbReference>
<dbReference type="Pfam" id="PF00471">
    <property type="entry name" value="Ribosomal_L33"/>
    <property type="match status" value="1"/>
</dbReference>
<dbReference type="SUPFAM" id="SSF57829">
    <property type="entry name" value="Zn-binding ribosomal proteins"/>
    <property type="match status" value="1"/>
</dbReference>
<dbReference type="PROSITE" id="PS00582">
    <property type="entry name" value="RIBOSOMAL_L33"/>
    <property type="match status" value="1"/>
</dbReference>
<accession>C4K7G1</accession>
<feature type="chain" id="PRO_1000204911" description="Large ribosomal subunit protein bL33">
    <location>
        <begin position="1"/>
        <end position="55"/>
    </location>
</feature>
<proteinExistence type="inferred from homology"/>